<proteinExistence type="inferred from homology"/>
<keyword id="KW-0378">Hydrolase</keyword>
<keyword id="KW-0662">Pyridine nucleotide biosynthesis</keyword>
<keyword id="KW-0663">Pyridoxal phosphate</keyword>
<keyword id="KW-1185">Reference proteome</keyword>
<name>KYNU_BURMA</name>
<dbReference type="EC" id="3.7.1.3" evidence="1"/>
<dbReference type="EMBL" id="CP000010">
    <property type="protein sequence ID" value="AAU49147.1"/>
    <property type="molecule type" value="Genomic_DNA"/>
</dbReference>
<dbReference type="RefSeq" id="WP_004189663.1">
    <property type="nucleotide sequence ID" value="NC_006348.1"/>
</dbReference>
<dbReference type="RefSeq" id="YP_102170.1">
    <property type="nucleotide sequence ID" value="NC_006348.1"/>
</dbReference>
<dbReference type="SMR" id="Q62M98"/>
<dbReference type="GeneID" id="92978122"/>
<dbReference type="KEGG" id="bma:BMA0352"/>
<dbReference type="PATRIC" id="fig|243160.12.peg.353"/>
<dbReference type="eggNOG" id="COG3844">
    <property type="taxonomic scope" value="Bacteria"/>
</dbReference>
<dbReference type="HOGENOM" id="CLU_003433_4_1_4"/>
<dbReference type="UniPathway" id="UPA00253">
    <property type="reaction ID" value="UER00329"/>
</dbReference>
<dbReference type="UniPathway" id="UPA00334">
    <property type="reaction ID" value="UER00455"/>
</dbReference>
<dbReference type="Proteomes" id="UP000006693">
    <property type="component" value="Chromosome 1"/>
</dbReference>
<dbReference type="GO" id="GO:0005737">
    <property type="term" value="C:cytoplasm"/>
    <property type="evidence" value="ECO:0007669"/>
    <property type="project" value="InterPro"/>
</dbReference>
<dbReference type="GO" id="GO:0030429">
    <property type="term" value="F:kynureninase activity"/>
    <property type="evidence" value="ECO:0007669"/>
    <property type="project" value="UniProtKB-UniRule"/>
</dbReference>
<dbReference type="GO" id="GO:0030170">
    <property type="term" value="F:pyridoxal phosphate binding"/>
    <property type="evidence" value="ECO:0007669"/>
    <property type="project" value="UniProtKB-UniRule"/>
</dbReference>
<dbReference type="GO" id="GO:0043420">
    <property type="term" value="P:anthranilate metabolic process"/>
    <property type="evidence" value="ECO:0007669"/>
    <property type="project" value="TreeGrafter"/>
</dbReference>
<dbReference type="GO" id="GO:0097053">
    <property type="term" value="P:L-kynurenine catabolic process"/>
    <property type="evidence" value="ECO:0007669"/>
    <property type="project" value="UniProtKB-UniRule"/>
</dbReference>
<dbReference type="GO" id="GO:0019441">
    <property type="term" value="P:L-tryptophan catabolic process to kynurenine"/>
    <property type="evidence" value="ECO:0007669"/>
    <property type="project" value="TreeGrafter"/>
</dbReference>
<dbReference type="GO" id="GO:0009435">
    <property type="term" value="P:NAD biosynthetic process"/>
    <property type="evidence" value="ECO:0007669"/>
    <property type="project" value="UniProtKB-UniPathway"/>
</dbReference>
<dbReference type="GO" id="GO:0019805">
    <property type="term" value="P:quinolinate biosynthetic process"/>
    <property type="evidence" value="ECO:0007669"/>
    <property type="project" value="UniProtKB-UniRule"/>
</dbReference>
<dbReference type="FunFam" id="3.40.640.10:FF:000107">
    <property type="entry name" value="Kynureninase"/>
    <property type="match status" value="1"/>
</dbReference>
<dbReference type="Gene3D" id="3.90.1150.10">
    <property type="entry name" value="Aspartate Aminotransferase, domain 1"/>
    <property type="match status" value="1"/>
</dbReference>
<dbReference type="Gene3D" id="3.40.640.10">
    <property type="entry name" value="Type I PLP-dependent aspartate aminotransferase-like (Major domain)"/>
    <property type="match status" value="1"/>
</dbReference>
<dbReference type="HAMAP" id="MF_01970">
    <property type="entry name" value="Kynureninase"/>
    <property type="match status" value="1"/>
</dbReference>
<dbReference type="InterPro" id="IPR010111">
    <property type="entry name" value="Kynureninase"/>
</dbReference>
<dbReference type="InterPro" id="IPR015424">
    <property type="entry name" value="PyrdxlP-dep_Trfase"/>
</dbReference>
<dbReference type="InterPro" id="IPR015421">
    <property type="entry name" value="PyrdxlP-dep_Trfase_major"/>
</dbReference>
<dbReference type="InterPro" id="IPR015422">
    <property type="entry name" value="PyrdxlP-dep_Trfase_small"/>
</dbReference>
<dbReference type="NCBIfam" id="TIGR01814">
    <property type="entry name" value="kynureninase"/>
    <property type="match status" value="1"/>
</dbReference>
<dbReference type="PANTHER" id="PTHR14084">
    <property type="entry name" value="KYNURENINASE"/>
    <property type="match status" value="1"/>
</dbReference>
<dbReference type="PANTHER" id="PTHR14084:SF0">
    <property type="entry name" value="KYNURENINASE"/>
    <property type="match status" value="1"/>
</dbReference>
<dbReference type="Pfam" id="PF22580">
    <property type="entry name" value="KYNU_C"/>
    <property type="match status" value="1"/>
</dbReference>
<dbReference type="PIRSF" id="PIRSF038800">
    <property type="entry name" value="KYNU"/>
    <property type="match status" value="1"/>
</dbReference>
<dbReference type="SUPFAM" id="SSF53383">
    <property type="entry name" value="PLP-dependent transferases"/>
    <property type="match status" value="1"/>
</dbReference>
<evidence type="ECO:0000255" key="1">
    <source>
        <dbReference type="HAMAP-Rule" id="MF_01970"/>
    </source>
</evidence>
<reference key="1">
    <citation type="journal article" date="2004" name="Proc. Natl. Acad. Sci. U.S.A.">
        <title>Structural flexibility in the Burkholderia mallei genome.</title>
        <authorList>
            <person name="Nierman W.C."/>
            <person name="DeShazer D."/>
            <person name="Kim H.S."/>
            <person name="Tettelin H."/>
            <person name="Nelson K.E."/>
            <person name="Feldblyum T.V."/>
            <person name="Ulrich R.L."/>
            <person name="Ronning C.M."/>
            <person name="Brinkac L.M."/>
            <person name="Daugherty S.C."/>
            <person name="Davidsen T.D."/>
            <person name="DeBoy R.T."/>
            <person name="Dimitrov G."/>
            <person name="Dodson R.J."/>
            <person name="Durkin A.S."/>
            <person name="Gwinn M.L."/>
            <person name="Haft D.H."/>
            <person name="Khouri H.M."/>
            <person name="Kolonay J.F."/>
            <person name="Madupu R."/>
            <person name="Mohammoud Y."/>
            <person name="Nelson W.C."/>
            <person name="Radune D."/>
            <person name="Romero C.M."/>
            <person name="Sarria S."/>
            <person name="Selengut J."/>
            <person name="Shamblin C."/>
            <person name="Sullivan S.A."/>
            <person name="White O."/>
            <person name="Yu Y."/>
            <person name="Zafar N."/>
            <person name="Zhou L."/>
            <person name="Fraser C.M."/>
        </authorList>
    </citation>
    <scope>NUCLEOTIDE SEQUENCE [LARGE SCALE GENOMIC DNA]</scope>
    <source>
        <strain>ATCC 23344</strain>
    </source>
</reference>
<gene>
    <name evidence="1" type="primary">kynU</name>
    <name type="ordered locus">BMA0352</name>
</gene>
<protein>
    <recommendedName>
        <fullName evidence="1">Kynureninase</fullName>
        <ecNumber evidence="1">3.7.1.3</ecNumber>
    </recommendedName>
    <alternativeName>
        <fullName evidence="1">L-kynurenine hydrolase</fullName>
    </alternativeName>
</protein>
<feature type="chain" id="PRO_0000356997" description="Kynureninase">
    <location>
        <begin position="1"/>
        <end position="416"/>
    </location>
</feature>
<feature type="binding site" evidence="1">
    <location>
        <position position="97"/>
    </location>
    <ligand>
        <name>pyridoxal 5'-phosphate</name>
        <dbReference type="ChEBI" id="CHEBI:597326"/>
    </ligand>
</feature>
<feature type="binding site" evidence="1">
    <location>
        <position position="98"/>
    </location>
    <ligand>
        <name>pyridoxal 5'-phosphate</name>
        <dbReference type="ChEBI" id="CHEBI:597326"/>
    </ligand>
</feature>
<feature type="binding site" evidence="1">
    <location>
        <begin position="129"/>
        <end position="132"/>
    </location>
    <ligand>
        <name>pyridoxal 5'-phosphate</name>
        <dbReference type="ChEBI" id="CHEBI:597326"/>
    </ligand>
</feature>
<feature type="binding site" evidence="1">
    <location>
        <position position="172"/>
    </location>
    <ligand>
        <name>pyridoxal 5'-phosphate</name>
        <dbReference type="ChEBI" id="CHEBI:597326"/>
    </ligand>
</feature>
<feature type="binding site" evidence="1">
    <location>
        <position position="201"/>
    </location>
    <ligand>
        <name>pyridoxal 5'-phosphate</name>
        <dbReference type="ChEBI" id="CHEBI:597326"/>
    </ligand>
</feature>
<feature type="binding site" evidence="1">
    <location>
        <position position="204"/>
    </location>
    <ligand>
        <name>pyridoxal 5'-phosphate</name>
        <dbReference type="ChEBI" id="CHEBI:597326"/>
    </ligand>
</feature>
<feature type="binding site" evidence="1">
    <location>
        <position position="226"/>
    </location>
    <ligand>
        <name>pyridoxal 5'-phosphate</name>
        <dbReference type="ChEBI" id="CHEBI:597326"/>
    </ligand>
</feature>
<feature type="binding site" evidence="1">
    <location>
        <position position="256"/>
    </location>
    <ligand>
        <name>pyridoxal 5'-phosphate</name>
        <dbReference type="ChEBI" id="CHEBI:597326"/>
    </ligand>
</feature>
<feature type="binding site" evidence="1">
    <location>
        <position position="282"/>
    </location>
    <ligand>
        <name>pyridoxal 5'-phosphate</name>
        <dbReference type="ChEBI" id="CHEBI:597326"/>
    </ligand>
</feature>
<feature type="modified residue" description="N6-(pyridoxal phosphate)lysine" evidence="1">
    <location>
        <position position="227"/>
    </location>
</feature>
<sequence>MKTREEALALDRDDPLAPLREQFALPAGVIYLDGNSLGAQPRAAAARAQQVIGAEWGEGLIRSWNTAGWFALPRRLGDRLAPLIGAADDEVAITDTISINLFKLLAAMLRHQARHAPKRRVIVSERSNFPTDLYIAQGLIAQLDRDYELRLIDDPADLPDALDDETAVAMITHVNYRTGYMHDMPSVTQTVRQAGALMLWDLAHSAGAVPVDLNGALADGAVGCTYKYLNGGPGSPAFVWVPKRHQRAFEQPLSGWWGHRAPFAMQPAFEPDPGIARFLCGTQPIVSMSMVECGLDVFAQTDMHAIRRKSLALTDAFVALVESRCAGQPLKLVTPRAHHQRGSQASFEHPHGYEVMQALIARGVIGDYREPRILRFGFTPLYTRFVDVWDAVETLRDILDTEAWRAPEFATRAAVT</sequence>
<organism>
    <name type="scientific">Burkholderia mallei (strain ATCC 23344)</name>
    <dbReference type="NCBI Taxonomy" id="243160"/>
    <lineage>
        <taxon>Bacteria</taxon>
        <taxon>Pseudomonadati</taxon>
        <taxon>Pseudomonadota</taxon>
        <taxon>Betaproteobacteria</taxon>
        <taxon>Burkholderiales</taxon>
        <taxon>Burkholderiaceae</taxon>
        <taxon>Burkholderia</taxon>
        <taxon>pseudomallei group</taxon>
    </lineage>
</organism>
<accession>Q62M98</accession>
<comment type="function">
    <text evidence="1">Catalyzes the cleavage of L-kynurenine (L-Kyn) and L-3-hydroxykynurenine (L-3OHKyn) into anthranilic acid (AA) and 3-hydroxyanthranilic acid (3-OHAA), respectively.</text>
</comment>
<comment type="catalytic activity">
    <reaction evidence="1">
        <text>L-kynurenine + H2O = anthranilate + L-alanine + H(+)</text>
        <dbReference type="Rhea" id="RHEA:16813"/>
        <dbReference type="ChEBI" id="CHEBI:15377"/>
        <dbReference type="ChEBI" id="CHEBI:15378"/>
        <dbReference type="ChEBI" id="CHEBI:16567"/>
        <dbReference type="ChEBI" id="CHEBI:57959"/>
        <dbReference type="ChEBI" id="CHEBI:57972"/>
        <dbReference type="EC" id="3.7.1.3"/>
    </reaction>
</comment>
<comment type="catalytic activity">
    <reaction evidence="1">
        <text>3-hydroxy-L-kynurenine + H2O = 3-hydroxyanthranilate + L-alanine + H(+)</text>
        <dbReference type="Rhea" id="RHEA:25143"/>
        <dbReference type="ChEBI" id="CHEBI:15377"/>
        <dbReference type="ChEBI" id="CHEBI:15378"/>
        <dbReference type="ChEBI" id="CHEBI:36559"/>
        <dbReference type="ChEBI" id="CHEBI:57972"/>
        <dbReference type="ChEBI" id="CHEBI:58125"/>
        <dbReference type="EC" id="3.7.1.3"/>
    </reaction>
</comment>
<comment type="cofactor">
    <cofactor evidence="1">
        <name>pyridoxal 5'-phosphate</name>
        <dbReference type="ChEBI" id="CHEBI:597326"/>
    </cofactor>
</comment>
<comment type="pathway">
    <text evidence="1">Amino-acid degradation; L-kynurenine degradation; L-alanine and anthranilate from L-kynurenine: step 1/1.</text>
</comment>
<comment type="pathway">
    <text evidence="1">Cofactor biosynthesis; NAD(+) biosynthesis; quinolinate from L-kynurenine: step 2/3.</text>
</comment>
<comment type="subunit">
    <text evidence="1">Homodimer.</text>
</comment>
<comment type="similarity">
    <text evidence="1">Belongs to the kynureninase family.</text>
</comment>